<evidence type="ECO:0000255" key="1">
    <source>
        <dbReference type="HAMAP-Rule" id="MF_01018"/>
    </source>
</evidence>
<proteinExistence type="inferred from homology"/>
<feature type="chain" id="PRO_1000135296" description="ATP phosphoribosyltransferase">
    <location>
        <begin position="1"/>
        <end position="208"/>
    </location>
</feature>
<keyword id="KW-0028">Amino-acid biosynthesis</keyword>
<keyword id="KW-0067">ATP-binding</keyword>
<keyword id="KW-0963">Cytoplasm</keyword>
<keyword id="KW-0328">Glycosyltransferase</keyword>
<keyword id="KW-0368">Histidine biosynthesis</keyword>
<keyword id="KW-0547">Nucleotide-binding</keyword>
<keyword id="KW-0808">Transferase</keyword>
<dbReference type="EC" id="2.4.2.17" evidence="1"/>
<dbReference type="EMBL" id="CP000969">
    <property type="protein sequence ID" value="ACB10097.1"/>
    <property type="molecule type" value="Genomic_DNA"/>
</dbReference>
<dbReference type="RefSeq" id="WP_004080478.1">
    <property type="nucleotide sequence ID" value="NC_010483.1"/>
</dbReference>
<dbReference type="SMR" id="B1L867"/>
<dbReference type="KEGG" id="trq:TRQ2_1766"/>
<dbReference type="HOGENOM" id="CLU_038115_2_0_0"/>
<dbReference type="UniPathway" id="UPA00031">
    <property type="reaction ID" value="UER00006"/>
</dbReference>
<dbReference type="Proteomes" id="UP000001687">
    <property type="component" value="Chromosome"/>
</dbReference>
<dbReference type="GO" id="GO:0005737">
    <property type="term" value="C:cytoplasm"/>
    <property type="evidence" value="ECO:0007669"/>
    <property type="project" value="UniProtKB-SubCell"/>
</dbReference>
<dbReference type="GO" id="GO:0005524">
    <property type="term" value="F:ATP binding"/>
    <property type="evidence" value="ECO:0007669"/>
    <property type="project" value="UniProtKB-KW"/>
</dbReference>
<dbReference type="GO" id="GO:0003879">
    <property type="term" value="F:ATP phosphoribosyltransferase activity"/>
    <property type="evidence" value="ECO:0007669"/>
    <property type="project" value="UniProtKB-UniRule"/>
</dbReference>
<dbReference type="GO" id="GO:0000105">
    <property type="term" value="P:L-histidine biosynthetic process"/>
    <property type="evidence" value="ECO:0007669"/>
    <property type="project" value="UniProtKB-UniRule"/>
</dbReference>
<dbReference type="CDD" id="cd13595">
    <property type="entry name" value="PBP2_HisGs"/>
    <property type="match status" value="1"/>
</dbReference>
<dbReference type="FunFam" id="3.40.190.10:FF:000008">
    <property type="entry name" value="ATP phosphoribosyltransferase"/>
    <property type="match status" value="1"/>
</dbReference>
<dbReference type="Gene3D" id="3.40.190.10">
    <property type="entry name" value="Periplasmic binding protein-like II"/>
    <property type="match status" value="2"/>
</dbReference>
<dbReference type="HAMAP" id="MF_01018">
    <property type="entry name" value="HisG_Short"/>
    <property type="match status" value="1"/>
</dbReference>
<dbReference type="InterPro" id="IPR013820">
    <property type="entry name" value="ATP_PRibTrfase_cat"/>
</dbReference>
<dbReference type="InterPro" id="IPR018198">
    <property type="entry name" value="ATP_PRibTrfase_CS"/>
</dbReference>
<dbReference type="InterPro" id="IPR001348">
    <property type="entry name" value="ATP_PRibTrfase_HisG"/>
</dbReference>
<dbReference type="InterPro" id="IPR024893">
    <property type="entry name" value="ATP_PRibTrfase_HisG_short"/>
</dbReference>
<dbReference type="NCBIfam" id="TIGR00070">
    <property type="entry name" value="hisG"/>
    <property type="match status" value="1"/>
</dbReference>
<dbReference type="PANTHER" id="PTHR21403:SF8">
    <property type="entry name" value="ATP PHOSPHORIBOSYLTRANSFERASE"/>
    <property type="match status" value="1"/>
</dbReference>
<dbReference type="PANTHER" id="PTHR21403">
    <property type="entry name" value="ATP PHOSPHORIBOSYLTRANSFERASE ATP-PRTASE"/>
    <property type="match status" value="1"/>
</dbReference>
<dbReference type="Pfam" id="PF01634">
    <property type="entry name" value="HisG"/>
    <property type="match status" value="1"/>
</dbReference>
<dbReference type="SUPFAM" id="SSF53850">
    <property type="entry name" value="Periplasmic binding protein-like II"/>
    <property type="match status" value="1"/>
</dbReference>
<dbReference type="PROSITE" id="PS01316">
    <property type="entry name" value="ATP_P_PHORIBOSYLTR"/>
    <property type="match status" value="1"/>
</dbReference>
<gene>
    <name evidence="1" type="primary">hisG</name>
    <name type="ordered locus">TRQ2_1766</name>
</gene>
<reference key="1">
    <citation type="journal article" date="2011" name="J. Bacteriol.">
        <title>Genome sequence of Thermotoga sp. strain RQ2, a hyperthermophilic bacterium isolated from a geothermally heated region of the seafloor near Ribeira Quente, the Azores.</title>
        <authorList>
            <person name="Swithers K.S."/>
            <person name="DiPippo J.L."/>
            <person name="Bruce D.C."/>
            <person name="Detter C."/>
            <person name="Tapia R."/>
            <person name="Han S."/>
            <person name="Saunders E."/>
            <person name="Goodwin L.A."/>
            <person name="Han J."/>
            <person name="Woyke T."/>
            <person name="Pitluck S."/>
            <person name="Pennacchio L."/>
            <person name="Nolan M."/>
            <person name="Mikhailova N."/>
            <person name="Lykidis A."/>
            <person name="Land M.L."/>
            <person name="Brettin T."/>
            <person name="Stetter K.O."/>
            <person name="Nelson K.E."/>
            <person name="Gogarten J.P."/>
            <person name="Noll K.M."/>
        </authorList>
    </citation>
    <scope>NUCLEOTIDE SEQUENCE [LARGE SCALE GENOMIC DNA]</scope>
    <source>
        <strain>RQ2</strain>
    </source>
</reference>
<protein>
    <recommendedName>
        <fullName evidence="1">ATP phosphoribosyltransferase</fullName>
        <shortName evidence="1">ATP-PRT</shortName>
        <shortName evidence="1">ATP-PRTase</shortName>
        <ecNumber evidence="1">2.4.2.17</ecNumber>
    </recommendedName>
</protein>
<name>HIS1_THESQ</name>
<comment type="function">
    <text evidence="1">Catalyzes the condensation of ATP and 5-phosphoribose 1-diphosphate to form N'-(5'-phosphoribosyl)-ATP (PR-ATP). Has a crucial role in the pathway because the rate of histidine biosynthesis seems to be controlled primarily by regulation of HisG enzymatic activity.</text>
</comment>
<comment type="catalytic activity">
    <reaction evidence="1">
        <text>1-(5-phospho-beta-D-ribosyl)-ATP + diphosphate = 5-phospho-alpha-D-ribose 1-diphosphate + ATP</text>
        <dbReference type="Rhea" id="RHEA:18473"/>
        <dbReference type="ChEBI" id="CHEBI:30616"/>
        <dbReference type="ChEBI" id="CHEBI:33019"/>
        <dbReference type="ChEBI" id="CHEBI:58017"/>
        <dbReference type="ChEBI" id="CHEBI:73183"/>
        <dbReference type="EC" id="2.4.2.17"/>
    </reaction>
</comment>
<comment type="pathway">
    <text evidence="1">Amino-acid biosynthesis; L-histidine biosynthesis; L-histidine from 5-phospho-alpha-D-ribose 1-diphosphate: step 1/9.</text>
</comment>
<comment type="subunit">
    <text evidence="1">Heteromultimer composed of HisG and HisZ subunits.</text>
</comment>
<comment type="subcellular location">
    <subcellularLocation>
        <location evidence="1">Cytoplasm</location>
    </subcellularLocation>
</comment>
<comment type="domain">
    <text>Lacks the C-terminal regulatory region which is replaced by HisZ.</text>
</comment>
<comment type="similarity">
    <text evidence="1">Belongs to the ATP phosphoribosyltransferase family. Short subfamily.</text>
</comment>
<organism>
    <name type="scientific">Thermotoga sp. (strain RQ2)</name>
    <dbReference type="NCBI Taxonomy" id="126740"/>
    <lineage>
        <taxon>Bacteria</taxon>
        <taxon>Thermotogati</taxon>
        <taxon>Thermotogota</taxon>
        <taxon>Thermotogae</taxon>
        <taxon>Thermotogales</taxon>
        <taxon>Thermotogaceae</taxon>
        <taxon>Thermotoga</taxon>
    </lineage>
</organism>
<accession>B1L867</accession>
<sequence>MLKLAIPKGRLEEKVMTYLKKTGVIFERESSILREGKDIVCFMVRPFDVPTYLVHGVADIGFCGTDVLLEKETSLIQPFFIPTNISRMVLAGPKGRGIPEGEKRIATKFPNVTQRYCESKGWHCRIIPLKGSVELAPIAGLSDLIVDITETGRTLKENNLEILDEIFVIRTHVVVNPVSYRTKREEVVSFLEKLQEVIEHDSNEQSRG</sequence>